<accession>A8L0K9</accession>
<name>DXS_PARS2</name>
<keyword id="KW-0414">Isoprene biosynthesis</keyword>
<keyword id="KW-0460">Magnesium</keyword>
<keyword id="KW-0479">Metal-binding</keyword>
<keyword id="KW-0784">Thiamine biosynthesis</keyword>
<keyword id="KW-0786">Thiamine pyrophosphate</keyword>
<keyword id="KW-0808">Transferase</keyword>
<dbReference type="EC" id="2.2.1.7" evidence="1"/>
<dbReference type="EMBL" id="CP000820">
    <property type="protein sequence ID" value="ABW14542.1"/>
    <property type="molecule type" value="Genomic_DNA"/>
</dbReference>
<dbReference type="RefSeq" id="WP_020462656.1">
    <property type="nucleotide sequence ID" value="NC_009921.1"/>
</dbReference>
<dbReference type="SMR" id="A8L0K9"/>
<dbReference type="STRING" id="298653.Franean1_5184"/>
<dbReference type="KEGG" id="fre:Franean1_5184"/>
<dbReference type="eggNOG" id="COG1154">
    <property type="taxonomic scope" value="Bacteria"/>
</dbReference>
<dbReference type="HOGENOM" id="CLU_009227_1_4_11"/>
<dbReference type="UniPathway" id="UPA00064">
    <property type="reaction ID" value="UER00091"/>
</dbReference>
<dbReference type="GO" id="GO:0005829">
    <property type="term" value="C:cytosol"/>
    <property type="evidence" value="ECO:0007669"/>
    <property type="project" value="TreeGrafter"/>
</dbReference>
<dbReference type="GO" id="GO:0008661">
    <property type="term" value="F:1-deoxy-D-xylulose-5-phosphate synthase activity"/>
    <property type="evidence" value="ECO:0007669"/>
    <property type="project" value="UniProtKB-UniRule"/>
</dbReference>
<dbReference type="GO" id="GO:0000287">
    <property type="term" value="F:magnesium ion binding"/>
    <property type="evidence" value="ECO:0007669"/>
    <property type="project" value="UniProtKB-UniRule"/>
</dbReference>
<dbReference type="GO" id="GO:0030976">
    <property type="term" value="F:thiamine pyrophosphate binding"/>
    <property type="evidence" value="ECO:0007669"/>
    <property type="project" value="UniProtKB-UniRule"/>
</dbReference>
<dbReference type="GO" id="GO:0052865">
    <property type="term" value="P:1-deoxy-D-xylulose 5-phosphate biosynthetic process"/>
    <property type="evidence" value="ECO:0007669"/>
    <property type="project" value="UniProtKB-UniPathway"/>
</dbReference>
<dbReference type="GO" id="GO:0019288">
    <property type="term" value="P:isopentenyl diphosphate biosynthetic process, methylerythritol 4-phosphate pathway"/>
    <property type="evidence" value="ECO:0007669"/>
    <property type="project" value="TreeGrafter"/>
</dbReference>
<dbReference type="GO" id="GO:0016114">
    <property type="term" value="P:terpenoid biosynthetic process"/>
    <property type="evidence" value="ECO:0007669"/>
    <property type="project" value="UniProtKB-UniRule"/>
</dbReference>
<dbReference type="GO" id="GO:0009228">
    <property type="term" value="P:thiamine biosynthetic process"/>
    <property type="evidence" value="ECO:0007669"/>
    <property type="project" value="UniProtKB-UniRule"/>
</dbReference>
<dbReference type="CDD" id="cd02007">
    <property type="entry name" value="TPP_DXS"/>
    <property type="match status" value="1"/>
</dbReference>
<dbReference type="CDD" id="cd07033">
    <property type="entry name" value="TPP_PYR_DXS_TK_like"/>
    <property type="match status" value="1"/>
</dbReference>
<dbReference type="FunFam" id="3.40.50.920:FF:000002">
    <property type="entry name" value="1-deoxy-D-xylulose-5-phosphate synthase"/>
    <property type="match status" value="1"/>
</dbReference>
<dbReference type="FunFam" id="3.40.50.970:FF:000005">
    <property type="entry name" value="1-deoxy-D-xylulose-5-phosphate synthase"/>
    <property type="match status" value="1"/>
</dbReference>
<dbReference type="Gene3D" id="3.40.50.920">
    <property type="match status" value="1"/>
</dbReference>
<dbReference type="Gene3D" id="3.40.50.970">
    <property type="match status" value="2"/>
</dbReference>
<dbReference type="HAMAP" id="MF_00315">
    <property type="entry name" value="DXP_synth"/>
    <property type="match status" value="1"/>
</dbReference>
<dbReference type="InterPro" id="IPR005477">
    <property type="entry name" value="Dxylulose-5-P_synthase"/>
</dbReference>
<dbReference type="InterPro" id="IPR029061">
    <property type="entry name" value="THDP-binding"/>
</dbReference>
<dbReference type="InterPro" id="IPR009014">
    <property type="entry name" value="Transketo_C/PFOR_II"/>
</dbReference>
<dbReference type="InterPro" id="IPR005475">
    <property type="entry name" value="Transketolase-like_Pyr-bd"/>
</dbReference>
<dbReference type="InterPro" id="IPR020826">
    <property type="entry name" value="Transketolase_BS"/>
</dbReference>
<dbReference type="InterPro" id="IPR033248">
    <property type="entry name" value="Transketolase_C"/>
</dbReference>
<dbReference type="InterPro" id="IPR049557">
    <property type="entry name" value="Transketolase_CS"/>
</dbReference>
<dbReference type="NCBIfam" id="TIGR00204">
    <property type="entry name" value="dxs"/>
    <property type="match status" value="1"/>
</dbReference>
<dbReference type="NCBIfam" id="NF003933">
    <property type="entry name" value="PRK05444.2-2"/>
    <property type="match status" value="1"/>
</dbReference>
<dbReference type="PANTHER" id="PTHR43322">
    <property type="entry name" value="1-D-DEOXYXYLULOSE 5-PHOSPHATE SYNTHASE-RELATED"/>
    <property type="match status" value="1"/>
</dbReference>
<dbReference type="PANTHER" id="PTHR43322:SF5">
    <property type="entry name" value="1-DEOXY-D-XYLULOSE-5-PHOSPHATE SYNTHASE, CHLOROPLASTIC"/>
    <property type="match status" value="1"/>
</dbReference>
<dbReference type="Pfam" id="PF13292">
    <property type="entry name" value="DXP_synthase_N"/>
    <property type="match status" value="1"/>
</dbReference>
<dbReference type="Pfam" id="PF02779">
    <property type="entry name" value="Transket_pyr"/>
    <property type="match status" value="1"/>
</dbReference>
<dbReference type="Pfam" id="PF02780">
    <property type="entry name" value="Transketolase_C"/>
    <property type="match status" value="1"/>
</dbReference>
<dbReference type="SMART" id="SM00861">
    <property type="entry name" value="Transket_pyr"/>
    <property type="match status" value="1"/>
</dbReference>
<dbReference type="SUPFAM" id="SSF52518">
    <property type="entry name" value="Thiamin diphosphate-binding fold (THDP-binding)"/>
    <property type="match status" value="2"/>
</dbReference>
<dbReference type="SUPFAM" id="SSF52922">
    <property type="entry name" value="TK C-terminal domain-like"/>
    <property type="match status" value="1"/>
</dbReference>
<dbReference type="PROSITE" id="PS00801">
    <property type="entry name" value="TRANSKETOLASE_1"/>
    <property type="match status" value="1"/>
</dbReference>
<dbReference type="PROSITE" id="PS00802">
    <property type="entry name" value="TRANSKETOLASE_2"/>
    <property type="match status" value="1"/>
</dbReference>
<feature type="chain" id="PRO_1000115743" description="1-deoxy-D-xylulose-5-phosphate synthase">
    <location>
        <begin position="1"/>
        <end position="650"/>
    </location>
</feature>
<feature type="region of interest" description="Disordered" evidence="2">
    <location>
        <begin position="631"/>
        <end position="650"/>
    </location>
</feature>
<feature type="binding site" evidence="1">
    <location>
        <position position="73"/>
    </location>
    <ligand>
        <name>thiamine diphosphate</name>
        <dbReference type="ChEBI" id="CHEBI:58937"/>
    </ligand>
</feature>
<feature type="binding site" evidence="1">
    <location>
        <begin position="114"/>
        <end position="116"/>
    </location>
    <ligand>
        <name>thiamine diphosphate</name>
        <dbReference type="ChEBI" id="CHEBI:58937"/>
    </ligand>
</feature>
<feature type="binding site" evidence="1">
    <location>
        <position position="145"/>
    </location>
    <ligand>
        <name>Mg(2+)</name>
        <dbReference type="ChEBI" id="CHEBI:18420"/>
    </ligand>
</feature>
<feature type="binding site" evidence="1">
    <location>
        <begin position="146"/>
        <end position="147"/>
    </location>
    <ligand>
        <name>thiamine diphosphate</name>
        <dbReference type="ChEBI" id="CHEBI:58937"/>
    </ligand>
</feature>
<feature type="binding site" evidence="1">
    <location>
        <position position="174"/>
    </location>
    <ligand>
        <name>Mg(2+)</name>
        <dbReference type="ChEBI" id="CHEBI:18420"/>
    </ligand>
</feature>
<feature type="binding site" evidence="1">
    <location>
        <position position="174"/>
    </location>
    <ligand>
        <name>thiamine diphosphate</name>
        <dbReference type="ChEBI" id="CHEBI:58937"/>
    </ligand>
</feature>
<feature type="binding site" evidence="1">
    <location>
        <position position="285"/>
    </location>
    <ligand>
        <name>thiamine diphosphate</name>
        <dbReference type="ChEBI" id="CHEBI:58937"/>
    </ligand>
</feature>
<feature type="binding site" evidence="1">
    <location>
        <position position="367"/>
    </location>
    <ligand>
        <name>thiamine diphosphate</name>
        <dbReference type="ChEBI" id="CHEBI:58937"/>
    </ligand>
</feature>
<reference key="1">
    <citation type="journal article" date="2007" name="Genome Res.">
        <title>Genome characteristics of facultatively symbiotic Frankia sp. strains reflect host range and host plant biogeography.</title>
        <authorList>
            <person name="Normand P."/>
            <person name="Lapierre P."/>
            <person name="Tisa L.S."/>
            <person name="Gogarten J.P."/>
            <person name="Alloisio N."/>
            <person name="Bagnarol E."/>
            <person name="Bassi C.A."/>
            <person name="Berry A.M."/>
            <person name="Bickhart D.M."/>
            <person name="Choisne N."/>
            <person name="Couloux A."/>
            <person name="Cournoyer B."/>
            <person name="Cruveiller S."/>
            <person name="Daubin V."/>
            <person name="Demange N."/>
            <person name="Francino M.P."/>
            <person name="Goltsman E."/>
            <person name="Huang Y."/>
            <person name="Kopp O.R."/>
            <person name="Labarre L."/>
            <person name="Lapidus A."/>
            <person name="Lavire C."/>
            <person name="Marechal J."/>
            <person name="Martinez M."/>
            <person name="Mastronunzio J.E."/>
            <person name="Mullin B.C."/>
            <person name="Niemann J."/>
            <person name="Pujic P."/>
            <person name="Rawnsley T."/>
            <person name="Rouy Z."/>
            <person name="Schenowitz C."/>
            <person name="Sellstedt A."/>
            <person name="Tavares F."/>
            <person name="Tomkins J.P."/>
            <person name="Vallenet D."/>
            <person name="Valverde C."/>
            <person name="Wall L.G."/>
            <person name="Wang Y."/>
            <person name="Medigue C."/>
            <person name="Benson D.R."/>
        </authorList>
    </citation>
    <scope>NUCLEOTIDE SEQUENCE [LARGE SCALE GENOMIC DNA]</scope>
    <source>
        <strain>EAN1pec</strain>
    </source>
</reference>
<comment type="function">
    <text evidence="1">Catalyzes the acyloin condensation reaction between C atoms 2 and 3 of pyruvate and glyceraldehyde 3-phosphate to yield 1-deoxy-D-xylulose-5-phosphate (DXP).</text>
</comment>
<comment type="catalytic activity">
    <reaction evidence="1">
        <text>D-glyceraldehyde 3-phosphate + pyruvate + H(+) = 1-deoxy-D-xylulose 5-phosphate + CO2</text>
        <dbReference type="Rhea" id="RHEA:12605"/>
        <dbReference type="ChEBI" id="CHEBI:15361"/>
        <dbReference type="ChEBI" id="CHEBI:15378"/>
        <dbReference type="ChEBI" id="CHEBI:16526"/>
        <dbReference type="ChEBI" id="CHEBI:57792"/>
        <dbReference type="ChEBI" id="CHEBI:59776"/>
        <dbReference type="EC" id="2.2.1.7"/>
    </reaction>
</comment>
<comment type="cofactor">
    <cofactor evidence="1">
        <name>Mg(2+)</name>
        <dbReference type="ChEBI" id="CHEBI:18420"/>
    </cofactor>
    <text evidence="1">Binds 1 Mg(2+) ion per subunit.</text>
</comment>
<comment type="cofactor">
    <cofactor evidence="1">
        <name>thiamine diphosphate</name>
        <dbReference type="ChEBI" id="CHEBI:58937"/>
    </cofactor>
    <text evidence="1">Binds 1 thiamine pyrophosphate per subunit.</text>
</comment>
<comment type="pathway">
    <text evidence="1">Metabolic intermediate biosynthesis; 1-deoxy-D-xylulose 5-phosphate biosynthesis; 1-deoxy-D-xylulose 5-phosphate from D-glyceraldehyde 3-phosphate and pyruvate: step 1/1.</text>
</comment>
<comment type="subunit">
    <text evidence="1">Homodimer.</text>
</comment>
<comment type="similarity">
    <text evidence="1">Belongs to the transketolase family. DXPS subfamily.</text>
</comment>
<protein>
    <recommendedName>
        <fullName evidence="1">1-deoxy-D-xylulose-5-phosphate synthase</fullName>
        <ecNumber evidence="1">2.2.1.7</ecNumber>
    </recommendedName>
    <alternativeName>
        <fullName evidence="1">1-deoxyxylulose-5-phosphate synthase</fullName>
        <shortName evidence="1">DXP synthase</shortName>
        <shortName evidence="1">DXPS</shortName>
    </alternativeName>
</protein>
<gene>
    <name evidence="1" type="primary">dxs</name>
    <name type="ordered locus">Franean1_5184</name>
</gene>
<proteinExistence type="inferred from homology"/>
<sequence length="650" mass="69351">MSLLSTIDSPQDVKRLDHEELVTLAAEIRDFLIHAVARTGGHLGPNLGAVELTLAIHRVFDSPFDRVLWDTGHQSYVHKILTGRREQFDRLRQRGGLSGYPSQAESEHDIIENSHASTALSYADGLSRAYELRGENRAVVAVVGDGALTGGMCWEALNNIAASDRQVVIVVNDNGRSYSPTIGGLADHLASLRLAPEYEQVLDVVKQVLGRTPLVGAPLFDALHGIKKGIKDVVTPQGMFEDLGLKYVGPVDGHDVVAMESALRRAKDFGGPVIVHAMTRKGFGYPAAEQDDADNFHAVGVIDPVTGKPKSASKGTTWTSIFSEEIVRIGSERPDVVTMTAAMLQPVGLKSFAKAFPDRVFDVGIAEQHAVTSAAGLAMGGLKPVVCIYATFLNRAFDQVLMDVAMHRQPVTFVLDRAGITGEDGASHNGMWDMSFLQVVPGLAIAAPRDAATLRAELDEAVSNTDGPTVVRYPKGKVAADSPAIDQVGGVDVLYRAPAAARHREVLLVSIGAMAPTCLDVAERVASQGIGITVVDPRWVKPLDPALVDLARDHDLVVTVEDNGRVGGVGACVAQLLRDADVDVPVREFGVAQRFLDHGKRDDVLAEVGLAPQDLARKVIEAVAKRQHALMGDEVGADESNQTPAGGGQA</sequence>
<organism>
    <name type="scientific">Parafrankia sp. (strain EAN1pec)</name>
    <dbReference type="NCBI Taxonomy" id="298653"/>
    <lineage>
        <taxon>Bacteria</taxon>
        <taxon>Bacillati</taxon>
        <taxon>Actinomycetota</taxon>
        <taxon>Actinomycetes</taxon>
        <taxon>Frankiales</taxon>
        <taxon>Frankiaceae</taxon>
        <taxon>Parafrankia</taxon>
    </lineage>
</organism>
<evidence type="ECO:0000255" key="1">
    <source>
        <dbReference type="HAMAP-Rule" id="MF_00315"/>
    </source>
</evidence>
<evidence type="ECO:0000256" key="2">
    <source>
        <dbReference type="SAM" id="MobiDB-lite"/>
    </source>
</evidence>